<name>PHT12_ORYSJ</name>
<reference key="1">
    <citation type="journal article" date="2002" name="Proc. Natl. Acad. Sci. U.S.A.">
        <title>Rice phosphate transporters include an evolutionarily divergent gene specifically activated in arbuscular mycorrhizal symbiosis.</title>
        <authorList>
            <person name="Paszkowski U."/>
            <person name="Kroken S."/>
            <person name="Roux C."/>
            <person name="Briggs S.P."/>
        </authorList>
    </citation>
    <scope>NUCLEOTIDE SEQUENCE [GENOMIC DNA / MRNA]</scope>
    <scope>INDUCTION</scope>
</reference>
<reference key="2">
    <citation type="submission" date="2003-06" db="EMBL/GenBank/DDBJ databases">
        <title>Isolation of a phosphate transporter gene from rice.</title>
        <authorList>
            <person name="Yao Q."/>
            <person name="Peng R."/>
            <person name="Xiong A."/>
        </authorList>
    </citation>
    <scope>NUCLEOTIDE SEQUENCE [MRNA]</scope>
</reference>
<reference key="3">
    <citation type="submission" date="2004-03" db="EMBL/GenBank/DDBJ databases">
        <title>Regulation of rice phosphate transporter gene expression by phosphate availability.</title>
        <authorList>
            <person name="Baek S.-H."/>
            <person name="Kim H.-S."/>
            <person name="Yun S.J."/>
        </authorList>
    </citation>
    <scope>NUCLEOTIDE SEQUENCE [MRNA]</scope>
    <source>
        <strain>cv. Dongjin</strain>
    </source>
</reference>
<reference key="4">
    <citation type="journal article" date="2005" name="Genome Res.">
        <title>Sequence, annotation, and analysis of synteny between rice chromosome 3 and diverged grass species.</title>
        <authorList>
            <consortium name="The rice chromosome 3 sequencing consortium"/>
            <person name="Buell C.R."/>
            <person name="Yuan Q."/>
            <person name="Ouyang S."/>
            <person name="Liu J."/>
            <person name="Zhu W."/>
            <person name="Wang A."/>
            <person name="Maiti R."/>
            <person name="Haas B."/>
            <person name="Wortman J."/>
            <person name="Pertea M."/>
            <person name="Jones K.M."/>
            <person name="Kim M."/>
            <person name="Overton L."/>
            <person name="Tsitrin T."/>
            <person name="Fadrosh D."/>
            <person name="Bera J."/>
            <person name="Weaver B."/>
            <person name="Jin S."/>
            <person name="Johri S."/>
            <person name="Reardon M."/>
            <person name="Webb K."/>
            <person name="Hill J."/>
            <person name="Moffat K."/>
            <person name="Tallon L."/>
            <person name="Van Aken S."/>
            <person name="Lewis M."/>
            <person name="Utterback T."/>
            <person name="Feldblyum T."/>
            <person name="Zismann V."/>
            <person name="Iobst S."/>
            <person name="Hsiao J."/>
            <person name="de Vazeille A.R."/>
            <person name="Salzberg S.L."/>
            <person name="White O."/>
            <person name="Fraser C.M."/>
            <person name="Yu Y."/>
            <person name="Kim H."/>
            <person name="Rambo T."/>
            <person name="Currie J."/>
            <person name="Collura K."/>
            <person name="Kernodle-Thompson S."/>
            <person name="Wei F."/>
            <person name="Kudrna K."/>
            <person name="Ammiraju J.S.S."/>
            <person name="Luo M."/>
            <person name="Goicoechea J.L."/>
            <person name="Wing R.A."/>
            <person name="Henry D."/>
            <person name="Oates R."/>
            <person name="Palmer M."/>
            <person name="Pries G."/>
            <person name="Saski C."/>
            <person name="Simmons J."/>
            <person name="Soderlund C."/>
            <person name="Nelson W."/>
            <person name="de la Bastide M."/>
            <person name="Spiegel L."/>
            <person name="Nascimento L."/>
            <person name="Huang E."/>
            <person name="Preston R."/>
            <person name="Zutavern T."/>
            <person name="Palmer L."/>
            <person name="O'Shaughnessy A."/>
            <person name="Dike S."/>
            <person name="McCombie W.R."/>
            <person name="Minx P."/>
            <person name="Cordum H."/>
            <person name="Wilson R."/>
            <person name="Jin W."/>
            <person name="Lee H.R."/>
            <person name="Jiang J."/>
            <person name="Jackson S."/>
        </authorList>
    </citation>
    <scope>NUCLEOTIDE SEQUENCE [LARGE SCALE GENOMIC DNA]</scope>
    <source>
        <strain>cv. Nipponbare</strain>
    </source>
</reference>
<reference key="5">
    <citation type="journal article" date="2005" name="Nature">
        <title>The map-based sequence of the rice genome.</title>
        <authorList>
            <consortium name="International rice genome sequencing project (IRGSP)"/>
        </authorList>
    </citation>
    <scope>NUCLEOTIDE SEQUENCE [LARGE SCALE GENOMIC DNA]</scope>
    <source>
        <strain>cv. Nipponbare</strain>
    </source>
</reference>
<reference key="6">
    <citation type="journal article" date="2008" name="Nucleic Acids Res.">
        <title>The rice annotation project database (RAP-DB): 2008 update.</title>
        <authorList>
            <consortium name="The rice annotation project (RAP)"/>
        </authorList>
    </citation>
    <scope>GENOME REANNOTATION</scope>
    <source>
        <strain>cv. Nipponbare</strain>
    </source>
</reference>
<reference key="7">
    <citation type="journal article" date="2013" name="Rice">
        <title>Improvement of the Oryza sativa Nipponbare reference genome using next generation sequence and optical map data.</title>
        <authorList>
            <person name="Kawahara Y."/>
            <person name="de la Bastide M."/>
            <person name="Hamilton J.P."/>
            <person name="Kanamori H."/>
            <person name="McCombie W.R."/>
            <person name="Ouyang S."/>
            <person name="Schwartz D.C."/>
            <person name="Tanaka T."/>
            <person name="Wu J."/>
            <person name="Zhou S."/>
            <person name="Childs K.L."/>
            <person name="Davidson R.M."/>
            <person name="Lin H."/>
            <person name="Quesada-Ocampo L."/>
            <person name="Vaillancourt B."/>
            <person name="Sakai H."/>
            <person name="Lee S.S."/>
            <person name="Kim J."/>
            <person name="Numa H."/>
            <person name="Itoh T."/>
            <person name="Buell C.R."/>
            <person name="Matsumoto T."/>
        </authorList>
    </citation>
    <scope>GENOME REANNOTATION</scope>
    <source>
        <strain>cv. Nipponbare</strain>
    </source>
</reference>
<reference key="8">
    <citation type="journal article" date="2005" name="PLoS Biol.">
        <title>The genomes of Oryza sativa: a history of duplications.</title>
        <authorList>
            <person name="Yu J."/>
            <person name="Wang J."/>
            <person name="Lin W."/>
            <person name="Li S."/>
            <person name="Li H."/>
            <person name="Zhou J."/>
            <person name="Ni P."/>
            <person name="Dong W."/>
            <person name="Hu S."/>
            <person name="Zeng C."/>
            <person name="Zhang J."/>
            <person name="Zhang Y."/>
            <person name="Li R."/>
            <person name="Xu Z."/>
            <person name="Li S."/>
            <person name="Li X."/>
            <person name="Zheng H."/>
            <person name="Cong L."/>
            <person name="Lin L."/>
            <person name="Yin J."/>
            <person name="Geng J."/>
            <person name="Li G."/>
            <person name="Shi J."/>
            <person name="Liu J."/>
            <person name="Lv H."/>
            <person name="Li J."/>
            <person name="Wang J."/>
            <person name="Deng Y."/>
            <person name="Ran L."/>
            <person name="Shi X."/>
            <person name="Wang X."/>
            <person name="Wu Q."/>
            <person name="Li C."/>
            <person name="Ren X."/>
            <person name="Wang J."/>
            <person name="Wang X."/>
            <person name="Li D."/>
            <person name="Liu D."/>
            <person name="Zhang X."/>
            <person name="Ji Z."/>
            <person name="Zhao W."/>
            <person name="Sun Y."/>
            <person name="Zhang Z."/>
            <person name="Bao J."/>
            <person name="Han Y."/>
            <person name="Dong L."/>
            <person name="Ji J."/>
            <person name="Chen P."/>
            <person name="Wu S."/>
            <person name="Liu J."/>
            <person name="Xiao Y."/>
            <person name="Bu D."/>
            <person name="Tan J."/>
            <person name="Yang L."/>
            <person name="Ye C."/>
            <person name="Zhang J."/>
            <person name="Xu J."/>
            <person name="Zhou Y."/>
            <person name="Yu Y."/>
            <person name="Zhang B."/>
            <person name="Zhuang S."/>
            <person name="Wei H."/>
            <person name="Liu B."/>
            <person name="Lei M."/>
            <person name="Yu H."/>
            <person name="Li Y."/>
            <person name="Xu H."/>
            <person name="Wei S."/>
            <person name="He X."/>
            <person name="Fang L."/>
            <person name="Zhang Z."/>
            <person name="Zhang Y."/>
            <person name="Huang X."/>
            <person name="Su Z."/>
            <person name="Tong W."/>
            <person name="Li J."/>
            <person name="Tong Z."/>
            <person name="Li S."/>
            <person name="Ye J."/>
            <person name="Wang L."/>
            <person name="Fang L."/>
            <person name="Lei T."/>
            <person name="Chen C.-S."/>
            <person name="Chen H.-C."/>
            <person name="Xu Z."/>
            <person name="Li H."/>
            <person name="Huang H."/>
            <person name="Zhang F."/>
            <person name="Xu H."/>
            <person name="Li N."/>
            <person name="Zhao C."/>
            <person name="Li S."/>
            <person name="Dong L."/>
            <person name="Huang Y."/>
            <person name="Li L."/>
            <person name="Xi Y."/>
            <person name="Qi Q."/>
            <person name="Li W."/>
            <person name="Zhang B."/>
            <person name="Hu W."/>
            <person name="Zhang Y."/>
            <person name="Tian X."/>
            <person name="Jiao Y."/>
            <person name="Liang X."/>
            <person name="Jin J."/>
            <person name="Gao L."/>
            <person name="Zheng W."/>
            <person name="Hao B."/>
            <person name="Liu S.-M."/>
            <person name="Wang W."/>
            <person name="Yuan L."/>
            <person name="Cao M."/>
            <person name="McDermott J."/>
            <person name="Samudrala R."/>
            <person name="Wang J."/>
            <person name="Wong G.K.-S."/>
            <person name="Yang H."/>
        </authorList>
    </citation>
    <scope>NUCLEOTIDE SEQUENCE [LARGE SCALE GENOMIC DNA]</scope>
    <source>
        <strain>cv. Nipponbare</strain>
    </source>
</reference>
<reference key="9">
    <citation type="journal article" date="2008" name="Biotechnol. Lett.">
        <title>Increased expression of OsPT1, a high-affinity phosphate transporter, enhances phosphate acquisition in rice.</title>
        <authorList>
            <person name="Seo H.-M."/>
            <person name="Jung Y."/>
            <person name="Song S."/>
            <person name="Kim Y."/>
            <person name="Kwon T."/>
            <person name="Kim D.-H."/>
            <person name="Jeung S.-J."/>
            <person name="Yi Y.-B."/>
            <person name="Yi G."/>
            <person name="Nam M.-H."/>
            <person name="Nam J."/>
        </authorList>
    </citation>
    <scope>INDUCTION</scope>
</reference>
<reference key="10">
    <citation type="journal article" date="2009" name="Plant J.">
        <title>Two rice phosphate transporters, OsPht1;2 and OsPht1;6, have different functions and kinetic properties in uptake and translocation.</title>
        <authorList>
            <person name="Ai P."/>
            <person name="Sun S."/>
            <person name="Zhao J."/>
            <person name="Fan X."/>
            <person name="Xin W."/>
            <person name="Guo Q."/>
            <person name="Yu L."/>
            <person name="Shen Q."/>
            <person name="Wu P."/>
            <person name="Miller A.J."/>
            <person name="Xu G."/>
        </authorList>
    </citation>
    <scope>FUNCTION</scope>
    <scope>TISSUE SPECIFICITY</scope>
    <scope>INDUCTION</scope>
</reference>
<reference key="11">
    <citation type="journal article" date="2010" name="Plant J.">
        <title>OsSPX1 suppresses the function of OsPHR2 in the regulation of expression of OsPT2 and phosphate homeostasis in shoots of rice.</title>
        <authorList>
            <person name="Liu F."/>
            <person name="Wang Z."/>
            <person name="Ren H."/>
            <person name="Shen C."/>
            <person name="Li Y."/>
            <person name="Ling H.Q."/>
            <person name="Wu C."/>
            <person name="Lian X."/>
            <person name="Wu P."/>
        </authorList>
    </citation>
    <scope>FUNCTION</scope>
    <scope>INDUCTION BY PHR2</scope>
</reference>
<keyword id="KW-0472">Membrane</keyword>
<keyword id="KW-0592">Phosphate transport</keyword>
<keyword id="KW-1185">Reference proteome</keyword>
<keyword id="KW-0769">Symport</keyword>
<keyword id="KW-0812">Transmembrane</keyword>
<keyword id="KW-1133">Transmembrane helix</keyword>
<keyword id="KW-0813">Transport</keyword>
<feature type="chain" id="PRO_0000365481" description="Inorganic phosphate transporter 1-2">
    <location>
        <begin position="1"/>
        <end position="528"/>
    </location>
</feature>
<feature type="topological domain" description="Cytoplasmic" evidence="1">
    <location>
        <begin position="1"/>
        <end position="24"/>
    </location>
</feature>
<feature type="transmembrane region" description="Helical" evidence="1">
    <location>
        <begin position="25"/>
        <end position="45"/>
    </location>
</feature>
<feature type="topological domain" description="Extracellular" evidence="1">
    <location>
        <begin position="46"/>
        <end position="71"/>
    </location>
</feature>
<feature type="transmembrane region" description="Helical" evidence="1">
    <location>
        <begin position="72"/>
        <end position="92"/>
    </location>
</feature>
<feature type="topological domain" description="Cytoplasmic" evidence="1">
    <location>
        <begin position="93"/>
        <end position="99"/>
    </location>
</feature>
<feature type="transmembrane region" description="Helical" evidence="1">
    <location>
        <begin position="100"/>
        <end position="120"/>
    </location>
</feature>
<feature type="topological domain" description="Extracellular" evidence="1">
    <location>
        <begin position="121"/>
        <end position="125"/>
    </location>
</feature>
<feature type="transmembrane region" description="Helical" evidence="1">
    <location>
        <begin position="126"/>
        <end position="146"/>
    </location>
</feature>
<feature type="topological domain" description="Cytoplasmic" evidence="1">
    <location>
        <begin position="147"/>
        <end position="163"/>
    </location>
</feature>
<feature type="transmembrane region" description="Helical" evidence="1">
    <location>
        <begin position="164"/>
        <end position="184"/>
    </location>
</feature>
<feature type="topological domain" description="Extracellular" evidence="1">
    <location>
        <begin position="185"/>
        <end position="212"/>
    </location>
</feature>
<feature type="transmembrane region" description="Helical" evidence="1">
    <location>
        <begin position="213"/>
        <end position="232"/>
    </location>
</feature>
<feature type="topological domain" description="Cytoplasmic" evidence="1">
    <location>
        <begin position="233"/>
        <end position="296"/>
    </location>
</feature>
<feature type="transmembrane region" description="Helical" evidence="1">
    <location>
        <begin position="297"/>
        <end position="317"/>
    </location>
</feature>
<feature type="topological domain" description="Extracellular" evidence="1">
    <location>
        <begin position="318"/>
        <end position="348"/>
    </location>
</feature>
<feature type="transmembrane region" description="Helical" evidence="1">
    <location>
        <begin position="349"/>
        <end position="369"/>
    </location>
</feature>
<feature type="topological domain" description="Cytoplasmic" evidence="1">
    <location>
        <begin position="370"/>
        <end position="371"/>
    </location>
</feature>
<feature type="transmembrane region" description="Helical" evidence="1">
    <location>
        <begin position="372"/>
        <end position="392"/>
    </location>
</feature>
<feature type="topological domain" description="Extracellular" evidence="1">
    <location>
        <begin position="393"/>
        <end position="405"/>
    </location>
</feature>
<feature type="transmembrane region" description="Helical" evidence="1">
    <location>
        <begin position="406"/>
        <end position="426"/>
    </location>
</feature>
<feature type="topological domain" description="Cytoplasmic" evidence="1">
    <location>
        <begin position="427"/>
        <end position="442"/>
    </location>
</feature>
<feature type="transmembrane region" description="Helical" evidence="1">
    <location>
        <begin position="443"/>
        <end position="463"/>
    </location>
</feature>
<feature type="topological domain" description="Extracellular" evidence="1">
    <location>
        <begin position="464"/>
        <end position="481"/>
    </location>
</feature>
<feature type="transmembrane region" description="Helical" evidence="1">
    <location>
        <begin position="482"/>
        <end position="502"/>
    </location>
</feature>
<feature type="topological domain" description="Cytoplasmic" evidence="1">
    <location>
        <begin position="503"/>
        <end position="528"/>
    </location>
</feature>
<feature type="sequence conflict" description="In Ref. 3; AAU84427." evidence="6" ref="3">
    <original>Y</original>
    <variation>H</variation>
    <location>
        <position position="473"/>
    </location>
</feature>
<accession>Q8GSD9</accession>
<accession>A0A0N7KGL1</accession>
<accession>Q56UU1</accession>
<evidence type="ECO:0000255" key="1"/>
<evidence type="ECO:0000269" key="2">
    <source>
    </source>
</evidence>
<evidence type="ECO:0000269" key="3">
    <source>
    </source>
</evidence>
<evidence type="ECO:0000269" key="4">
    <source>
    </source>
</evidence>
<evidence type="ECO:0000269" key="5">
    <source>
    </source>
</evidence>
<evidence type="ECO:0000305" key="6"/>
<organism>
    <name type="scientific">Oryza sativa subsp. japonica</name>
    <name type="common">Rice</name>
    <dbReference type="NCBI Taxonomy" id="39947"/>
    <lineage>
        <taxon>Eukaryota</taxon>
        <taxon>Viridiplantae</taxon>
        <taxon>Streptophyta</taxon>
        <taxon>Embryophyta</taxon>
        <taxon>Tracheophyta</taxon>
        <taxon>Spermatophyta</taxon>
        <taxon>Magnoliopsida</taxon>
        <taxon>Liliopsida</taxon>
        <taxon>Poales</taxon>
        <taxon>Poaceae</taxon>
        <taxon>BOP clade</taxon>
        <taxon>Oryzoideae</taxon>
        <taxon>Oryzeae</taxon>
        <taxon>Oryzinae</taxon>
        <taxon>Oryza</taxon>
        <taxon>Oryza sativa</taxon>
    </lineage>
</organism>
<dbReference type="EMBL" id="AF536959">
    <property type="protein sequence ID" value="AAN39040.1"/>
    <property type="molecule type" value="mRNA"/>
</dbReference>
<dbReference type="EMBL" id="AF536962">
    <property type="protein sequence ID" value="AAN39043.1"/>
    <property type="molecule type" value="Genomic_DNA"/>
</dbReference>
<dbReference type="EMBL" id="AY332471">
    <property type="protein sequence ID" value="AAQ01157.1"/>
    <property type="molecule type" value="mRNA"/>
</dbReference>
<dbReference type="EMBL" id="AY569608">
    <property type="protein sequence ID" value="AAU84427.1"/>
    <property type="molecule type" value="mRNA"/>
</dbReference>
<dbReference type="EMBL" id="DP000009">
    <property type="protein sequence ID" value="ABF94008.1"/>
    <property type="molecule type" value="Genomic_DNA"/>
</dbReference>
<dbReference type="EMBL" id="AP008209">
    <property type="protein sequence ID" value="BAF10893.1"/>
    <property type="molecule type" value="Genomic_DNA"/>
</dbReference>
<dbReference type="EMBL" id="AP014959">
    <property type="protein sequence ID" value="BAS82321.1"/>
    <property type="molecule type" value="Genomic_DNA"/>
</dbReference>
<dbReference type="EMBL" id="CM000140">
    <property type="protein sequence ID" value="EAZ25605.1"/>
    <property type="molecule type" value="Genomic_DNA"/>
</dbReference>
<dbReference type="RefSeq" id="XP_015630484.1">
    <property type="nucleotide sequence ID" value="XM_015774998.1"/>
</dbReference>
<dbReference type="SMR" id="Q8GSD9"/>
<dbReference type="FunCoup" id="Q8GSD9">
    <property type="interactions" value="378"/>
</dbReference>
<dbReference type="STRING" id="39947.Q8GSD9"/>
<dbReference type="PaxDb" id="39947-Q8GSD9"/>
<dbReference type="EnsemblPlants" id="Os03t0150800-01">
    <property type="protein sequence ID" value="Os03t0150800-01"/>
    <property type="gene ID" value="Os03g0150800"/>
</dbReference>
<dbReference type="Gramene" id="Os03t0150800-01">
    <property type="protein sequence ID" value="Os03t0150800-01"/>
    <property type="gene ID" value="Os03g0150800"/>
</dbReference>
<dbReference type="KEGG" id="dosa:Os03g0150800"/>
<dbReference type="eggNOG" id="KOG0252">
    <property type="taxonomic scope" value="Eukaryota"/>
</dbReference>
<dbReference type="HOGENOM" id="CLU_001265_46_14_1"/>
<dbReference type="InParanoid" id="Q8GSD9"/>
<dbReference type="OMA" id="ESFPTRY"/>
<dbReference type="OrthoDB" id="433512at2759"/>
<dbReference type="PlantReactome" id="R-OSA-9031225">
    <property type="pathway name" value="Response to phosphate deficiency"/>
</dbReference>
<dbReference type="Proteomes" id="UP000000763">
    <property type="component" value="Chromosome 3"/>
</dbReference>
<dbReference type="Proteomes" id="UP000007752">
    <property type="component" value="Chromosome 3"/>
</dbReference>
<dbReference type="Proteomes" id="UP000059680">
    <property type="component" value="Chromosome 3"/>
</dbReference>
<dbReference type="GO" id="GO:0016020">
    <property type="term" value="C:membrane"/>
    <property type="evidence" value="ECO:0007669"/>
    <property type="project" value="UniProtKB-SubCell"/>
</dbReference>
<dbReference type="GO" id="GO:0005315">
    <property type="term" value="F:phosphate transmembrane transporter activity"/>
    <property type="evidence" value="ECO:0007669"/>
    <property type="project" value="InterPro"/>
</dbReference>
<dbReference type="GO" id="GO:0015293">
    <property type="term" value="F:symporter activity"/>
    <property type="evidence" value="ECO:0007669"/>
    <property type="project" value="UniProtKB-KW"/>
</dbReference>
<dbReference type="GO" id="GO:0006817">
    <property type="term" value="P:phosphate ion transport"/>
    <property type="evidence" value="ECO:0007669"/>
    <property type="project" value="UniProtKB-KW"/>
</dbReference>
<dbReference type="CDD" id="cd17364">
    <property type="entry name" value="MFS_PhT"/>
    <property type="match status" value="1"/>
</dbReference>
<dbReference type="FunFam" id="1.20.1250.20:FF:000175">
    <property type="entry name" value="Inorganic phosphate transporter 1-6"/>
    <property type="match status" value="1"/>
</dbReference>
<dbReference type="Gene3D" id="1.20.1250.20">
    <property type="entry name" value="MFS general substrate transporter like domains"/>
    <property type="match status" value="2"/>
</dbReference>
<dbReference type="InterPro" id="IPR020846">
    <property type="entry name" value="MFS_dom"/>
</dbReference>
<dbReference type="InterPro" id="IPR005828">
    <property type="entry name" value="MFS_sugar_transport-like"/>
</dbReference>
<dbReference type="InterPro" id="IPR036259">
    <property type="entry name" value="MFS_trans_sf"/>
</dbReference>
<dbReference type="InterPro" id="IPR004738">
    <property type="entry name" value="Phos_permease"/>
</dbReference>
<dbReference type="NCBIfam" id="TIGR00887">
    <property type="entry name" value="2A0109"/>
    <property type="match status" value="1"/>
</dbReference>
<dbReference type="PANTHER" id="PTHR24064">
    <property type="entry name" value="SOLUTE CARRIER FAMILY 22 MEMBER"/>
    <property type="match status" value="1"/>
</dbReference>
<dbReference type="Pfam" id="PF00083">
    <property type="entry name" value="Sugar_tr"/>
    <property type="match status" value="1"/>
</dbReference>
<dbReference type="SUPFAM" id="SSF103473">
    <property type="entry name" value="MFS general substrate transporter"/>
    <property type="match status" value="1"/>
</dbReference>
<dbReference type="PROSITE" id="PS50850">
    <property type="entry name" value="MFS"/>
    <property type="match status" value="1"/>
</dbReference>
<sequence>MAGSQLNVLVKLDQAKTQWYHFMAIVIAGMGFFTDAYDLFCIALVTKLLGRLYYTDITKPNPGTLPPNVSSAVTGVALCGTLAGQLFFGWLGDKLGRKSVYGFTLILMVVCSIASGLSFGHTPKSVIATLCFFRFWLGFGIGGDYPLSATIMSEYASKKTRGAFIAAVFAMQGFGILFGAIVALVVSAGFRHAYPAPSYAQNPAASLAPQADYTWRLILMFGTIPAGLTYYWRMKMPETARYTALVARNAKQAAADMSKVLHAEIEERPEVVESQVVAGETWGLFSRQFMKRHGMHLLATTSTWFLLDIAFYSQNLFQKDIFSKVGWIPPAKTMNALEELYRISRAQALIALCGTIPGYWFTVAFIDIVGRFWIQIMGFFMMTVFMLALGVPYDHWTHPAHHTGFVVLYALTFFFANFGPNSTTFIVPAEIFPARLRSTCHGISAASGKAGAIIGAFGFLYAAQDQHNPDAGYSRGIGIRNALFVLAGTNFLGMLMTLLVPESKGLSLEEMSKDNVVDETAQEAIAQA</sequence>
<gene>
    <name type="primary">PTH1-2</name>
    <name type="synonym">PT1</name>
    <name type="synonym">PT2</name>
    <name type="ordered locus">Os03g0150800</name>
    <name type="ordered locus">LOC_Os03g05640</name>
    <name type="ORF">OsJ_009088</name>
</gene>
<proteinExistence type="evidence at transcript level"/>
<protein>
    <recommendedName>
        <fullName>Inorganic phosphate transporter 1-2</fullName>
        <shortName>OsPT2</shortName>
        <shortName>OsPht1;2</shortName>
    </recommendedName>
    <alternativeName>
        <fullName>H(+)/Pi cotransporter</fullName>
    </alternativeName>
    <alternativeName>
        <fullName>OsPT1</fullName>
    </alternativeName>
</protein>
<comment type="function">
    <text evidence="4 5">Low-affinity transporter for inorganic phosphate (Pi) (PubMed:18980647). Involved in internal Pi transport from root to shoot (PubMed:18980647, PubMed:20149131). Responsible for most of the PHR2-mediated accumulation of excess shoot Pi under abundant Pi conditions, but not for PHO2-mediated accumulation of excess shoot Pi (PubMed:20149131). Acts as a H(+):phosphate symporter (PubMed:18980647).</text>
</comment>
<comment type="subcellular location">
    <subcellularLocation>
        <location evidence="1">Membrane</location>
        <topology evidence="1">Multi-pass membrane protein</topology>
    </subcellularLocation>
</comment>
<comment type="tissue specificity">
    <text evidence="4">Expressed in the root stele and leaf phloem and xylem.</text>
</comment>
<comment type="induction">
    <text evidence="2 3 4 5">Regulated by the transcription factor PHR2 (PubMed:20149131). Up-regulated in roots by phosphate starvation (PubMed:18563580). Down-regulated in roots by high phosphate or colonization by the mycorrhizal fungus G.intraradices (PubMed:12271140).</text>
</comment>
<comment type="miscellaneous">
    <text>Although related to the sugar transporter family, it does not transport sugars.</text>
</comment>
<comment type="similarity">
    <text evidence="6">Belongs to the major facilitator superfamily. Phosphate:H(+) symporter (TC 2.A.1.9) family.</text>
</comment>